<proteinExistence type="inferred from homology"/>
<evidence type="ECO:0000255" key="1">
    <source>
        <dbReference type="HAMAP-Rule" id="MF_01813"/>
    </source>
</evidence>
<protein>
    <recommendedName>
        <fullName evidence="1">Ubiquinone/menaquinone biosynthesis C-methyltransferase UbiE</fullName>
        <ecNumber evidence="1">2.1.1.163</ecNumber>
        <ecNumber evidence="1">2.1.1.201</ecNumber>
    </recommendedName>
    <alternativeName>
        <fullName evidence="1">2-methoxy-6-polyprenyl-1,4-benzoquinol methylase</fullName>
    </alternativeName>
    <alternativeName>
        <fullName evidence="1">Demethylmenaquinone methyltransferase</fullName>
    </alternativeName>
</protein>
<gene>
    <name evidence="1" type="primary">ubiE</name>
    <name type="ordered locus">GSU0867</name>
</gene>
<feature type="chain" id="PRO_0000193280" description="Ubiquinone/menaquinone biosynthesis C-methyltransferase UbiE">
    <location>
        <begin position="1"/>
        <end position="256"/>
    </location>
</feature>
<feature type="binding site" evidence="1">
    <location>
        <position position="78"/>
    </location>
    <ligand>
        <name>S-adenosyl-L-methionine</name>
        <dbReference type="ChEBI" id="CHEBI:59789"/>
    </ligand>
</feature>
<feature type="binding site" evidence="1">
    <location>
        <position position="99"/>
    </location>
    <ligand>
        <name>S-adenosyl-L-methionine</name>
        <dbReference type="ChEBI" id="CHEBI:59789"/>
    </ligand>
</feature>
<accession>Q74EU2</accession>
<dbReference type="EC" id="2.1.1.163" evidence="1"/>
<dbReference type="EC" id="2.1.1.201" evidence="1"/>
<dbReference type="EMBL" id="AE017180">
    <property type="protein sequence ID" value="AAR34197.1"/>
    <property type="molecule type" value="Genomic_DNA"/>
</dbReference>
<dbReference type="RefSeq" id="NP_951924.1">
    <property type="nucleotide sequence ID" value="NC_002939.5"/>
</dbReference>
<dbReference type="RefSeq" id="WP_010941531.1">
    <property type="nucleotide sequence ID" value="NC_002939.5"/>
</dbReference>
<dbReference type="SMR" id="Q74EU2"/>
<dbReference type="FunCoup" id="Q74EU2">
    <property type="interactions" value="462"/>
</dbReference>
<dbReference type="STRING" id="243231.GSU0867"/>
<dbReference type="EnsemblBacteria" id="AAR34197">
    <property type="protein sequence ID" value="AAR34197"/>
    <property type="gene ID" value="GSU0867"/>
</dbReference>
<dbReference type="KEGG" id="gsu:GSU0867"/>
<dbReference type="PATRIC" id="fig|243231.5.peg.865"/>
<dbReference type="eggNOG" id="COG2226">
    <property type="taxonomic scope" value="Bacteria"/>
</dbReference>
<dbReference type="HOGENOM" id="CLU_037990_0_0_7"/>
<dbReference type="InParanoid" id="Q74EU2"/>
<dbReference type="OrthoDB" id="9808140at2"/>
<dbReference type="UniPathway" id="UPA00079">
    <property type="reaction ID" value="UER00169"/>
</dbReference>
<dbReference type="UniPathway" id="UPA00232"/>
<dbReference type="Proteomes" id="UP000000577">
    <property type="component" value="Chromosome"/>
</dbReference>
<dbReference type="GO" id="GO:0008425">
    <property type="term" value="F:2-methoxy-6-polyprenyl-1,4-benzoquinol methyltransferase activity"/>
    <property type="evidence" value="ECO:0000318"/>
    <property type="project" value="GO_Central"/>
</dbReference>
<dbReference type="GO" id="GO:0043770">
    <property type="term" value="F:demethylmenaquinone methyltransferase activity"/>
    <property type="evidence" value="ECO:0007669"/>
    <property type="project" value="UniProtKB-UniRule"/>
</dbReference>
<dbReference type="GO" id="GO:0009234">
    <property type="term" value="P:menaquinone biosynthetic process"/>
    <property type="evidence" value="ECO:0007669"/>
    <property type="project" value="UniProtKB-UniRule"/>
</dbReference>
<dbReference type="GO" id="GO:0032259">
    <property type="term" value="P:methylation"/>
    <property type="evidence" value="ECO:0007669"/>
    <property type="project" value="UniProtKB-KW"/>
</dbReference>
<dbReference type="GO" id="GO:0006744">
    <property type="term" value="P:ubiquinone biosynthetic process"/>
    <property type="evidence" value="ECO:0000318"/>
    <property type="project" value="GO_Central"/>
</dbReference>
<dbReference type="CDD" id="cd02440">
    <property type="entry name" value="AdoMet_MTases"/>
    <property type="match status" value="1"/>
</dbReference>
<dbReference type="Gene3D" id="3.40.50.150">
    <property type="entry name" value="Vaccinia Virus protein VP39"/>
    <property type="match status" value="1"/>
</dbReference>
<dbReference type="HAMAP" id="MF_01813">
    <property type="entry name" value="MenG_UbiE_methyltr"/>
    <property type="match status" value="1"/>
</dbReference>
<dbReference type="InterPro" id="IPR029063">
    <property type="entry name" value="SAM-dependent_MTases_sf"/>
</dbReference>
<dbReference type="InterPro" id="IPR004033">
    <property type="entry name" value="UbiE/COQ5_MeTrFase"/>
</dbReference>
<dbReference type="InterPro" id="IPR023576">
    <property type="entry name" value="UbiE/COQ5_MeTrFase_CS"/>
</dbReference>
<dbReference type="NCBIfam" id="TIGR01934">
    <property type="entry name" value="MenG_MenH_UbiE"/>
    <property type="match status" value="1"/>
</dbReference>
<dbReference type="NCBIfam" id="NF001244">
    <property type="entry name" value="PRK00216.1-5"/>
    <property type="match status" value="1"/>
</dbReference>
<dbReference type="PANTHER" id="PTHR43591:SF24">
    <property type="entry name" value="2-METHOXY-6-POLYPRENYL-1,4-BENZOQUINOL METHYLASE, MITOCHONDRIAL"/>
    <property type="match status" value="1"/>
</dbReference>
<dbReference type="PANTHER" id="PTHR43591">
    <property type="entry name" value="METHYLTRANSFERASE"/>
    <property type="match status" value="1"/>
</dbReference>
<dbReference type="Pfam" id="PF01209">
    <property type="entry name" value="Ubie_methyltran"/>
    <property type="match status" value="1"/>
</dbReference>
<dbReference type="SUPFAM" id="SSF53335">
    <property type="entry name" value="S-adenosyl-L-methionine-dependent methyltransferases"/>
    <property type="match status" value="1"/>
</dbReference>
<dbReference type="PROSITE" id="PS51608">
    <property type="entry name" value="SAM_MT_UBIE"/>
    <property type="match status" value="1"/>
</dbReference>
<dbReference type="PROSITE" id="PS01183">
    <property type="entry name" value="UBIE_1"/>
    <property type="match status" value="1"/>
</dbReference>
<dbReference type="PROSITE" id="PS01184">
    <property type="entry name" value="UBIE_2"/>
    <property type="match status" value="1"/>
</dbReference>
<reference key="1">
    <citation type="journal article" date="2003" name="Science">
        <title>Genome of Geobacter sulfurreducens: metal reduction in subsurface environments.</title>
        <authorList>
            <person name="Methe B.A."/>
            <person name="Nelson K.E."/>
            <person name="Eisen J.A."/>
            <person name="Paulsen I.T."/>
            <person name="Nelson W.C."/>
            <person name="Heidelberg J.F."/>
            <person name="Wu D."/>
            <person name="Wu M."/>
            <person name="Ward N.L."/>
            <person name="Beanan M.J."/>
            <person name="Dodson R.J."/>
            <person name="Madupu R."/>
            <person name="Brinkac L.M."/>
            <person name="Daugherty S.C."/>
            <person name="DeBoy R.T."/>
            <person name="Durkin A.S."/>
            <person name="Gwinn M.L."/>
            <person name="Kolonay J.F."/>
            <person name="Sullivan S.A."/>
            <person name="Haft D.H."/>
            <person name="Selengut J."/>
            <person name="Davidsen T.M."/>
            <person name="Zafar N."/>
            <person name="White O."/>
            <person name="Tran B."/>
            <person name="Romero C."/>
            <person name="Forberger H.A."/>
            <person name="Weidman J.F."/>
            <person name="Khouri H.M."/>
            <person name="Feldblyum T.V."/>
            <person name="Utterback T.R."/>
            <person name="Van Aken S.E."/>
            <person name="Lovley D.R."/>
            <person name="Fraser C.M."/>
        </authorList>
    </citation>
    <scope>NUCLEOTIDE SEQUENCE [LARGE SCALE GENOMIC DNA]</scope>
    <source>
        <strain>ATCC 51573 / DSM 12127 / PCA</strain>
    </source>
</reference>
<name>UBIE_GEOSL</name>
<comment type="function">
    <text evidence="1">Methyltransferase required for the conversion of demethylmenaquinol (DMKH2) to menaquinol (MKH2) and the conversion of 2-polyprenyl-6-methoxy-1,4-benzoquinol (DDMQH2) to 2-polyprenyl-3-methyl-6-methoxy-1,4-benzoquinol (DMQH2).</text>
</comment>
<comment type="catalytic activity">
    <reaction evidence="1">
        <text>a 2-demethylmenaquinol + S-adenosyl-L-methionine = a menaquinol + S-adenosyl-L-homocysteine + H(+)</text>
        <dbReference type="Rhea" id="RHEA:42640"/>
        <dbReference type="Rhea" id="RHEA-COMP:9539"/>
        <dbReference type="Rhea" id="RHEA-COMP:9563"/>
        <dbReference type="ChEBI" id="CHEBI:15378"/>
        <dbReference type="ChEBI" id="CHEBI:18151"/>
        <dbReference type="ChEBI" id="CHEBI:55437"/>
        <dbReference type="ChEBI" id="CHEBI:57856"/>
        <dbReference type="ChEBI" id="CHEBI:59789"/>
        <dbReference type="EC" id="2.1.1.163"/>
    </reaction>
</comment>
<comment type="catalytic activity">
    <reaction evidence="1">
        <text>a 2-methoxy-6-(all-trans-polyprenyl)benzene-1,4-diol + S-adenosyl-L-methionine = a 5-methoxy-2-methyl-3-(all-trans-polyprenyl)benzene-1,4-diol + S-adenosyl-L-homocysteine + H(+)</text>
        <dbReference type="Rhea" id="RHEA:28286"/>
        <dbReference type="Rhea" id="RHEA-COMP:10858"/>
        <dbReference type="Rhea" id="RHEA-COMP:10859"/>
        <dbReference type="ChEBI" id="CHEBI:15378"/>
        <dbReference type="ChEBI" id="CHEBI:57856"/>
        <dbReference type="ChEBI" id="CHEBI:59789"/>
        <dbReference type="ChEBI" id="CHEBI:84166"/>
        <dbReference type="ChEBI" id="CHEBI:84167"/>
        <dbReference type="EC" id="2.1.1.201"/>
    </reaction>
</comment>
<comment type="pathway">
    <text evidence="1">Quinol/quinone metabolism; menaquinone biosynthesis; menaquinol from 1,4-dihydroxy-2-naphthoate: step 2/2.</text>
</comment>
<comment type="pathway">
    <text evidence="1">Cofactor biosynthesis; ubiquinone biosynthesis.</text>
</comment>
<comment type="similarity">
    <text evidence="1">Belongs to the class I-like SAM-binding methyltransferase superfamily. MenG/UbiE family.</text>
</comment>
<organism>
    <name type="scientific">Geobacter sulfurreducens (strain ATCC 51573 / DSM 12127 / PCA)</name>
    <dbReference type="NCBI Taxonomy" id="243231"/>
    <lineage>
        <taxon>Bacteria</taxon>
        <taxon>Pseudomonadati</taxon>
        <taxon>Thermodesulfobacteriota</taxon>
        <taxon>Desulfuromonadia</taxon>
        <taxon>Geobacterales</taxon>
        <taxon>Geobacteraceae</taxon>
        <taxon>Geobacter</taxon>
    </lineage>
</organism>
<keyword id="KW-0474">Menaquinone biosynthesis</keyword>
<keyword id="KW-0489">Methyltransferase</keyword>
<keyword id="KW-1185">Reference proteome</keyword>
<keyword id="KW-0949">S-adenosyl-L-methionine</keyword>
<keyword id="KW-0808">Transferase</keyword>
<keyword id="KW-0831">Ubiquinone biosynthesis</keyword>
<sequence length="256" mass="28924">MKNLNLYHFFDCKDRKITMYRLTEKGERIRDMFSDIAPRYDFLNRLLSFGVDRRWRRNAVKCIRWSEGGRVLDVATGTGDVALEIARQTPPSVAIVGVDFSEGMVALGRDKVAGSPYAGRITMEIAPCEAIPFPDDTFDSVTIAFGIRNVVDRSQGLSEMLRVLKPGGRAVILEFSTPRSRLFKRIYSFYFLRVLPVIGGLFSQFGAYKYLPDSVLEFPSQEEFKALMASVGFRDTAHRDQTFGIATIYTGEKGLK</sequence>